<name>MURD_MYCTA</name>
<accession>A5U4I2</accession>
<organism>
    <name type="scientific">Mycobacterium tuberculosis (strain ATCC 25177 / H37Ra)</name>
    <dbReference type="NCBI Taxonomy" id="419947"/>
    <lineage>
        <taxon>Bacteria</taxon>
        <taxon>Bacillati</taxon>
        <taxon>Actinomycetota</taxon>
        <taxon>Actinomycetes</taxon>
        <taxon>Mycobacteriales</taxon>
        <taxon>Mycobacteriaceae</taxon>
        <taxon>Mycobacterium</taxon>
        <taxon>Mycobacterium tuberculosis complex</taxon>
    </lineage>
</organism>
<proteinExistence type="evidence at protein level"/>
<sequence length="496" mass="50354">MSGLPRSVPDVLDPLGPGAPVLVAGGRVTGQAVAAVLTRFGATPTVCDDDPVMLRPHAERGLPTVSSSDAVQQITGYALVVASPGFSPATPLLAAAAAAGVPIWGDVELAWRLDAAGCYGPPRSWLVVTGTNGKTTTTSMLHAMLIAGGRRAVLCGNIGSAVLDVLDEPAELLAVELSSFQLHWAPSLRPEAGAVLNIAEDHLDWHATMAEYTAAKARVLTGGVAVAGLDDSRAAALLDGSPAQVRVGFRLGEPAARELGVRDAHLVDRAFSDDLTLLPVASIPVPGPVGVLDALAAAALARSVGVPAGAIADAVTSFRVGRHRAEVVAVADGITYVDDSKATNPHAARASVLAYPRVVWIAGGLLKGASLHAEVAAMASRLVGAVLIGRDRAAVAEALSRHAPDVPVVQVVAGEDTGMPATVEVPVACVLDVAKDDKAGETVGAAVMTAAVAAARRMAQPGDTVLLAPAGASFDQFTGYADRGEAFATAVRAVIR</sequence>
<comment type="function">
    <text evidence="2">Cell wall formation. Catalyzes the addition of glutamate to the nucleotide precursor UDP-N-acetylmuramoyl-L-alanine (UMA).</text>
</comment>
<comment type="catalytic activity">
    <reaction evidence="2">
        <text>UDP-N-acetyl-alpha-D-muramoyl-L-alanine + D-glutamate + ATP = UDP-N-acetyl-alpha-D-muramoyl-L-alanyl-D-glutamate + ADP + phosphate + H(+)</text>
        <dbReference type="Rhea" id="RHEA:16429"/>
        <dbReference type="ChEBI" id="CHEBI:15378"/>
        <dbReference type="ChEBI" id="CHEBI:29986"/>
        <dbReference type="ChEBI" id="CHEBI:30616"/>
        <dbReference type="ChEBI" id="CHEBI:43474"/>
        <dbReference type="ChEBI" id="CHEBI:83898"/>
        <dbReference type="ChEBI" id="CHEBI:83900"/>
        <dbReference type="ChEBI" id="CHEBI:456216"/>
        <dbReference type="EC" id="6.3.2.9"/>
    </reaction>
</comment>
<comment type="pathway">
    <text evidence="2">Cell wall biogenesis; peptidoglycan biosynthesis.</text>
</comment>
<comment type="subunit">
    <text evidence="3">Interacts with PknA.</text>
</comment>
<comment type="subcellular location">
    <subcellularLocation>
        <location evidence="2">Cytoplasm</location>
    </subcellularLocation>
</comment>
<comment type="PTM">
    <text evidence="3">Phosphorylated by PknA.</text>
</comment>
<comment type="similarity">
    <text evidence="2">Belongs to the MurCDEF family.</text>
</comment>
<comment type="sequence caution" evidence="1">
    <conflict type="erroneous initiation">
        <sequence resource="EMBL-CDS" id="ABQ73932"/>
    </conflict>
    <text>Truncated N-terminus.</text>
</comment>
<dbReference type="EC" id="6.3.2.9" evidence="2"/>
<dbReference type="EMBL" id="CP000611">
    <property type="protein sequence ID" value="ABQ73932.1"/>
    <property type="status" value="ALT_INIT"/>
    <property type="molecule type" value="Genomic_DNA"/>
</dbReference>
<dbReference type="SMR" id="A5U4I2"/>
<dbReference type="KEGG" id="mra:MRA_2170"/>
<dbReference type="eggNOG" id="COG0771">
    <property type="taxonomic scope" value="Bacteria"/>
</dbReference>
<dbReference type="HOGENOM" id="CLU_032540_0_0_11"/>
<dbReference type="BRENDA" id="6.3.2.9">
    <property type="organism ID" value="3445"/>
</dbReference>
<dbReference type="UniPathway" id="UPA00219"/>
<dbReference type="Proteomes" id="UP000001988">
    <property type="component" value="Chromosome"/>
</dbReference>
<dbReference type="GO" id="GO:0005737">
    <property type="term" value="C:cytoplasm"/>
    <property type="evidence" value="ECO:0007669"/>
    <property type="project" value="UniProtKB-SubCell"/>
</dbReference>
<dbReference type="GO" id="GO:0005524">
    <property type="term" value="F:ATP binding"/>
    <property type="evidence" value="ECO:0007669"/>
    <property type="project" value="UniProtKB-UniRule"/>
</dbReference>
<dbReference type="GO" id="GO:0008764">
    <property type="term" value="F:UDP-N-acetylmuramoylalanine-D-glutamate ligase activity"/>
    <property type="evidence" value="ECO:0007669"/>
    <property type="project" value="UniProtKB-UniRule"/>
</dbReference>
<dbReference type="GO" id="GO:0051301">
    <property type="term" value="P:cell division"/>
    <property type="evidence" value="ECO:0007669"/>
    <property type="project" value="UniProtKB-KW"/>
</dbReference>
<dbReference type="GO" id="GO:0071555">
    <property type="term" value="P:cell wall organization"/>
    <property type="evidence" value="ECO:0007669"/>
    <property type="project" value="UniProtKB-KW"/>
</dbReference>
<dbReference type="GO" id="GO:0009252">
    <property type="term" value="P:peptidoglycan biosynthetic process"/>
    <property type="evidence" value="ECO:0007669"/>
    <property type="project" value="UniProtKB-UniRule"/>
</dbReference>
<dbReference type="GO" id="GO:0008360">
    <property type="term" value="P:regulation of cell shape"/>
    <property type="evidence" value="ECO:0007669"/>
    <property type="project" value="UniProtKB-KW"/>
</dbReference>
<dbReference type="Gene3D" id="3.90.190.20">
    <property type="entry name" value="Mur ligase, C-terminal domain"/>
    <property type="match status" value="1"/>
</dbReference>
<dbReference type="Gene3D" id="3.40.1190.10">
    <property type="entry name" value="Mur-like, catalytic domain"/>
    <property type="match status" value="1"/>
</dbReference>
<dbReference type="Gene3D" id="3.40.50.720">
    <property type="entry name" value="NAD(P)-binding Rossmann-like Domain"/>
    <property type="match status" value="1"/>
</dbReference>
<dbReference type="HAMAP" id="MF_00639">
    <property type="entry name" value="MurD"/>
    <property type="match status" value="1"/>
</dbReference>
<dbReference type="InterPro" id="IPR036565">
    <property type="entry name" value="Mur-like_cat_sf"/>
</dbReference>
<dbReference type="InterPro" id="IPR004101">
    <property type="entry name" value="Mur_ligase_C"/>
</dbReference>
<dbReference type="InterPro" id="IPR036615">
    <property type="entry name" value="Mur_ligase_C_dom_sf"/>
</dbReference>
<dbReference type="InterPro" id="IPR013221">
    <property type="entry name" value="Mur_ligase_cen"/>
</dbReference>
<dbReference type="InterPro" id="IPR005762">
    <property type="entry name" value="MurD"/>
</dbReference>
<dbReference type="NCBIfam" id="TIGR01087">
    <property type="entry name" value="murD"/>
    <property type="match status" value="1"/>
</dbReference>
<dbReference type="PANTHER" id="PTHR43692">
    <property type="entry name" value="UDP-N-ACETYLMURAMOYLALANINE--D-GLUTAMATE LIGASE"/>
    <property type="match status" value="1"/>
</dbReference>
<dbReference type="PANTHER" id="PTHR43692:SF1">
    <property type="entry name" value="UDP-N-ACETYLMURAMOYLALANINE--D-GLUTAMATE LIGASE"/>
    <property type="match status" value="1"/>
</dbReference>
<dbReference type="Pfam" id="PF02875">
    <property type="entry name" value="Mur_ligase_C"/>
    <property type="match status" value="1"/>
</dbReference>
<dbReference type="Pfam" id="PF08245">
    <property type="entry name" value="Mur_ligase_M"/>
    <property type="match status" value="1"/>
</dbReference>
<dbReference type="SUPFAM" id="SSF51984">
    <property type="entry name" value="MurCD N-terminal domain"/>
    <property type="match status" value="1"/>
</dbReference>
<dbReference type="SUPFAM" id="SSF53623">
    <property type="entry name" value="MurD-like peptide ligases, catalytic domain"/>
    <property type="match status" value="1"/>
</dbReference>
<dbReference type="SUPFAM" id="SSF53244">
    <property type="entry name" value="MurD-like peptide ligases, peptide-binding domain"/>
    <property type="match status" value="1"/>
</dbReference>
<protein>
    <recommendedName>
        <fullName evidence="2">UDP-N-acetylmuramoylalanine--D-glutamate ligase</fullName>
        <ecNumber evidence="2">6.3.2.9</ecNumber>
    </recommendedName>
    <alternativeName>
        <fullName evidence="2">D-glutamic acid-adding enzyme</fullName>
    </alternativeName>
    <alternativeName>
        <fullName evidence="2">UDP-N-acetylmuramoyl-L-alanyl-D-glutamate synthetase</fullName>
    </alternativeName>
</protein>
<gene>
    <name evidence="2" type="primary">murD</name>
    <name type="ordered locus">MRA_2170</name>
</gene>
<feature type="chain" id="PRO_0000301440" description="UDP-N-acetylmuramoylalanine--D-glutamate ligase">
    <location>
        <begin position="1"/>
        <end position="496"/>
    </location>
</feature>
<feature type="binding site" evidence="2">
    <location>
        <begin position="130"/>
        <end position="136"/>
    </location>
    <ligand>
        <name>ATP</name>
        <dbReference type="ChEBI" id="CHEBI:30616"/>
    </ligand>
</feature>
<reference key="1">
    <citation type="journal article" date="2008" name="PLoS ONE">
        <title>Genetic basis of virulence attenuation revealed by comparative genomic analysis of Mycobacterium tuberculosis strain H37Ra versus H37Rv.</title>
        <authorList>
            <person name="Zheng H."/>
            <person name="Lu L."/>
            <person name="Wang B."/>
            <person name="Pu S."/>
            <person name="Zhang X."/>
            <person name="Zhu G."/>
            <person name="Shi W."/>
            <person name="Zhang L."/>
            <person name="Wang H."/>
            <person name="Wang S."/>
            <person name="Zhao G."/>
            <person name="Zhang Y."/>
        </authorList>
    </citation>
    <scope>NUCLEOTIDE SEQUENCE [LARGE SCALE GENOMIC DNA]</scope>
    <source>
        <strain>ATCC 25177 / H37Ra</strain>
    </source>
</reference>
<reference key="2">
    <citation type="journal article" date="2008" name="Biochem. J.">
        <title>Ability of PknA, a mycobacterial eukaryotic-type serine/threonine kinase, to transphosphorylate MurD, a ligase involved in the process of peptidoglycan biosynthesis.</title>
        <authorList>
            <person name="Thakur M."/>
            <person name="Chakraborti P.K."/>
        </authorList>
    </citation>
    <scope>INTERACTION WITH PKNA</scope>
    <scope>PHOSPHORYLATION</scope>
    <source>
        <strain>ATCC 25177 / H37Ra</strain>
    </source>
</reference>
<evidence type="ECO:0000250" key="1">
    <source>
        <dbReference type="UniProtKB" id="P9WJL5"/>
    </source>
</evidence>
<evidence type="ECO:0000255" key="2">
    <source>
        <dbReference type="HAMAP-Rule" id="MF_00639"/>
    </source>
</evidence>
<evidence type="ECO:0000269" key="3">
    <source>
    </source>
</evidence>
<keyword id="KW-0067">ATP-binding</keyword>
<keyword id="KW-0131">Cell cycle</keyword>
<keyword id="KW-0132">Cell division</keyword>
<keyword id="KW-0133">Cell shape</keyword>
<keyword id="KW-0961">Cell wall biogenesis/degradation</keyword>
<keyword id="KW-0963">Cytoplasm</keyword>
<keyword id="KW-0436">Ligase</keyword>
<keyword id="KW-0547">Nucleotide-binding</keyword>
<keyword id="KW-0573">Peptidoglycan synthesis</keyword>
<keyword id="KW-0597">Phosphoprotein</keyword>
<keyword id="KW-1185">Reference proteome</keyword>